<protein>
    <recommendedName>
        <fullName>3-keto-steroid reductase</fullName>
        <ecNumber>1.1.1.270</ecNumber>
    </recommendedName>
</protein>
<name>ERG27_DEBHA</name>
<gene>
    <name type="primary">ERG27</name>
    <name type="ordered locus">DEHA2E20130g</name>
</gene>
<comment type="function">
    <text evidence="1">Responsible for the reduction of the keto group on the C-3 of sterols.</text>
</comment>
<comment type="catalytic activity">
    <reaction>
        <text>a 3beta-hydroxysteroid + NADP(+) = a 3-oxosteroid + NADPH + H(+)</text>
        <dbReference type="Rhea" id="RHEA:34787"/>
        <dbReference type="ChEBI" id="CHEBI:15378"/>
        <dbReference type="ChEBI" id="CHEBI:36836"/>
        <dbReference type="ChEBI" id="CHEBI:47788"/>
        <dbReference type="ChEBI" id="CHEBI:57783"/>
        <dbReference type="ChEBI" id="CHEBI:58349"/>
        <dbReference type="EC" id="1.1.1.270"/>
    </reaction>
</comment>
<comment type="pathway">
    <text>Steroid biosynthesis; zymosterol biosynthesis; zymosterol from lanosterol: step 5/6.</text>
</comment>
<comment type="similarity">
    <text evidence="4">Belongs to the short-chain dehydrogenases/reductases (SDR) family. ERG27 subfamily.</text>
</comment>
<reference key="1">
    <citation type="journal article" date="2004" name="Nature">
        <title>Genome evolution in yeasts.</title>
        <authorList>
            <person name="Dujon B."/>
            <person name="Sherman D."/>
            <person name="Fischer G."/>
            <person name="Durrens P."/>
            <person name="Casaregola S."/>
            <person name="Lafontaine I."/>
            <person name="de Montigny J."/>
            <person name="Marck C."/>
            <person name="Neuveglise C."/>
            <person name="Talla E."/>
            <person name="Goffard N."/>
            <person name="Frangeul L."/>
            <person name="Aigle M."/>
            <person name="Anthouard V."/>
            <person name="Babour A."/>
            <person name="Barbe V."/>
            <person name="Barnay S."/>
            <person name="Blanchin S."/>
            <person name="Beckerich J.-M."/>
            <person name="Beyne E."/>
            <person name="Bleykasten C."/>
            <person name="Boisrame A."/>
            <person name="Boyer J."/>
            <person name="Cattolico L."/>
            <person name="Confanioleri F."/>
            <person name="de Daruvar A."/>
            <person name="Despons L."/>
            <person name="Fabre E."/>
            <person name="Fairhead C."/>
            <person name="Ferry-Dumazet H."/>
            <person name="Groppi A."/>
            <person name="Hantraye F."/>
            <person name="Hennequin C."/>
            <person name="Jauniaux N."/>
            <person name="Joyet P."/>
            <person name="Kachouri R."/>
            <person name="Kerrest A."/>
            <person name="Koszul R."/>
            <person name="Lemaire M."/>
            <person name="Lesur I."/>
            <person name="Ma L."/>
            <person name="Muller H."/>
            <person name="Nicaud J.-M."/>
            <person name="Nikolski M."/>
            <person name="Oztas S."/>
            <person name="Ozier-Kalogeropoulos O."/>
            <person name="Pellenz S."/>
            <person name="Potier S."/>
            <person name="Richard G.-F."/>
            <person name="Straub M.-L."/>
            <person name="Suleau A."/>
            <person name="Swennen D."/>
            <person name="Tekaia F."/>
            <person name="Wesolowski-Louvel M."/>
            <person name="Westhof E."/>
            <person name="Wirth B."/>
            <person name="Zeniou-Meyer M."/>
            <person name="Zivanovic Y."/>
            <person name="Bolotin-Fukuhara M."/>
            <person name="Thierry A."/>
            <person name="Bouchier C."/>
            <person name="Caudron B."/>
            <person name="Scarpelli C."/>
            <person name="Gaillardin C."/>
            <person name="Weissenbach J."/>
            <person name="Wincker P."/>
            <person name="Souciet J.-L."/>
        </authorList>
    </citation>
    <scope>NUCLEOTIDE SEQUENCE [LARGE SCALE GENOMIC DNA]</scope>
    <source>
        <strain>ATCC 36239 / CBS 767 / BCRC 21394 / JCM 1990 / NBRC 0083 / IGC 2968</strain>
    </source>
</reference>
<accession>Q6BNP0</accession>
<feature type="chain" id="PRO_0000054592" description="3-keto-steroid reductase">
    <location>
        <begin position="1"/>
        <end position="346"/>
    </location>
</feature>
<feature type="active site" description="Proton donor" evidence="3">
    <location>
        <position position="182"/>
    </location>
</feature>
<feature type="active site" description="Proton donor" evidence="3">
    <location>
        <position position="205"/>
    </location>
</feature>
<feature type="active site" description="Lowers pKa of active site Tyr" evidence="3">
    <location>
        <position position="209"/>
    </location>
</feature>
<feature type="binding site" evidence="2">
    <location>
        <position position="20"/>
    </location>
    <ligand>
        <name>NADP(+)</name>
        <dbReference type="ChEBI" id="CHEBI:58349"/>
    </ligand>
</feature>
<feature type="binding site" evidence="2">
    <location>
        <position position="43"/>
    </location>
    <ligand>
        <name>NADP(+)</name>
        <dbReference type="ChEBI" id="CHEBI:58349"/>
    </ligand>
</feature>
<feature type="binding site" evidence="2">
    <location>
        <position position="49"/>
    </location>
    <ligand>
        <name>NADP(+)</name>
        <dbReference type="ChEBI" id="CHEBI:58349"/>
    </ligand>
</feature>
<feature type="binding site" evidence="3">
    <location>
        <position position="205"/>
    </location>
    <ligand>
        <name>NADP(+)</name>
        <dbReference type="ChEBI" id="CHEBI:58349"/>
    </ligand>
</feature>
<feature type="binding site" evidence="3">
    <location>
        <position position="209"/>
    </location>
    <ligand>
        <name>NADP(+)</name>
        <dbReference type="ChEBI" id="CHEBI:58349"/>
    </ligand>
</feature>
<feature type="binding site" evidence="2">
    <location>
        <position position="241"/>
    </location>
    <ligand>
        <name>NADP(+)</name>
        <dbReference type="ChEBI" id="CHEBI:58349"/>
    </ligand>
</feature>
<keyword id="KW-0444">Lipid biosynthesis</keyword>
<keyword id="KW-0443">Lipid metabolism</keyword>
<keyword id="KW-0521">NADP</keyword>
<keyword id="KW-0560">Oxidoreductase</keyword>
<keyword id="KW-1185">Reference proteome</keyword>
<keyword id="KW-0752">Steroid biosynthesis</keyword>
<organism>
    <name type="scientific">Debaryomyces hansenii (strain ATCC 36239 / CBS 767 / BCRC 21394 / JCM 1990 / NBRC 0083 / IGC 2968)</name>
    <name type="common">Yeast</name>
    <name type="synonym">Torulaspora hansenii</name>
    <dbReference type="NCBI Taxonomy" id="284592"/>
    <lineage>
        <taxon>Eukaryota</taxon>
        <taxon>Fungi</taxon>
        <taxon>Dikarya</taxon>
        <taxon>Ascomycota</taxon>
        <taxon>Saccharomycotina</taxon>
        <taxon>Pichiomycetes</taxon>
        <taxon>Debaryomycetaceae</taxon>
        <taxon>Debaryomyces</taxon>
    </lineage>
</organism>
<sequence>MIKDNDNSKVALITGTSSNLGINIAYRLLEQLPSSTNVTLIVTSRTLPKVKEVITNINQYSKTKLNRTGQLEFDYLLVDFTDMVSVLSAYYDLNKKFKKIDYLFVNAAQGVYSGIDWVAATKEICRNPMEGVTNPTYKTQRVGVKSNDNMGLVFQANVFGPYYLIHKIKHLLQKGGRIIWISSLMSNPKYLSFNDLQLLKSPESYEGSKRLVDLMHFGTFKQLQSEYGIEQYLVQPGIFTSFSFFKFLNVFTYYSMLMLFYLARLFGSPSHNISGFIAANAPVTCALGNESQSVKVCSVSNRTGKEYLSYQEVDTTGSADISAYLEKLCHEWDLTLKDQIVNTRQP</sequence>
<proteinExistence type="inferred from homology"/>
<evidence type="ECO:0000250" key="1"/>
<evidence type="ECO:0000250" key="2">
    <source>
        <dbReference type="UniProtKB" id="L0E2Z4"/>
    </source>
</evidence>
<evidence type="ECO:0000250" key="3">
    <source>
        <dbReference type="UniProtKB" id="O93868"/>
    </source>
</evidence>
<evidence type="ECO:0000305" key="4"/>
<dbReference type="EC" id="1.1.1.270"/>
<dbReference type="EMBL" id="CR382137">
    <property type="protein sequence ID" value="CAG88453.1"/>
    <property type="molecule type" value="Genomic_DNA"/>
</dbReference>
<dbReference type="RefSeq" id="XP_460180.1">
    <property type="nucleotide sequence ID" value="XM_460180.1"/>
</dbReference>
<dbReference type="SMR" id="Q6BNP0"/>
<dbReference type="FunCoup" id="Q6BNP0">
    <property type="interactions" value="162"/>
</dbReference>
<dbReference type="STRING" id="284592.Q6BNP0"/>
<dbReference type="GeneID" id="2902497"/>
<dbReference type="KEGG" id="dha:DEHA2E20130g"/>
<dbReference type="VEuPathDB" id="FungiDB:DEHA2E20130g"/>
<dbReference type="eggNOG" id="KOG1478">
    <property type="taxonomic scope" value="Eukaryota"/>
</dbReference>
<dbReference type="HOGENOM" id="CLU_029944_1_0_1"/>
<dbReference type="InParanoid" id="Q6BNP0"/>
<dbReference type="OMA" id="WHNIDGY"/>
<dbReference type="OrthoDB" id="9989144at2759"/>
<dbReference type="UniPathway" id="UPA00770">
    <property type="reaction ID" value="UER00758"/>
</dbReference>
<dbReference type="Proteomes" id="UP000000599">
    <property type="component" value="Chromosome E"/>
</dbReference>
<dbReference type="GO" id="GO:0005789">
    <property type="term" value="C:endoplasmic reticulum membrane"/>
    <property type="evidence" value="ECO:0007669"/>
    <property type="project" value="EnsemblFungi"/>
</dbReference>
<dbReference type="GO" id="GO:0005811">
    <property type="term" value="C:lipid droplet"/>
    <property type="evidence" value="ECO:0007669"/>
    <property type="project" value="EnsemblFungi"/>
</dbReference>
<dbReference type="GO" id="GO:0005741">
    <property type="term" value="C:mitochondrial outer membrane"/>
    <property type="evidence" value="ECO:0007669"/>
    <property type="project" value="TreeGrafter"/>
</dbReference>
<dbReference type="GO" id="GO:0000253">
    <property type="term" value="F:3-beta-hydroxysteroid 3-dehydrogenase (NADP+) activity"/>
    <property type="evidence" value="ECO:0007669"/>
    <property type="project" value="UniProtKB-EC"/>
</dbReference>
<dbReference type="GO" id="GO:0006696">
    <property type="term" value="P:ergosterol biosynthetic process"/>
    <property type="evidence" value="ECO:0007669"/>
    <property type="project" value="EnsemblFungi"/>
</dbReference>
<dbReference type="FunFam" id="3.40.50.720:FF:000525">
    <property type="entry name" value="3-keto-steroid reductase"/>
    <property type="match status" value="1"/>
</dbReference>
<dbReference type="Gene3D" id="3.40.50.720">
    <property type="entry name" value="NAD(P)-binding Rossmann-like Domain"/>
    <property type="match status" value="1"/>
</dbReference>
<dbReference type="InterPro" id="IPR051593">
    <property type="entry name" value="Ergosterol_Biosynth_ERG27"/>
</dbReference>
<dbReference type="InterPro" id="IPR036291">
    <property type="entry name" value="NAD(P)-bd_dom_sf"/>
</dbReference>
<dbReference type="InterPro" id="IPR002347">
    <property type="entry name" value="SDR_fam"/>
</dbReference>
<dbReference type="PANTHER" id="PTHR43647:SF1">
    <property type="entry name" value="3-KETO-STEROID REDUCTASE ERG27"/>
    <property type="match status" value="1"/>
</dbReference>
<dbReference type="PANTHER" id="PTHR43647">
    <property type="entry name" value="DEHYDROGENASE"/>
    <property type="match status" value="1"/>
</dbReference>
<dbReference type="Pfam" id="PF00106">
    <property type="entry name" value="adh_short"/>
    <property type="match status" value="1"/>
</dbReference>
<dbReference type="PRINTS" id="PR00081">
    <property type="entry name" value="GDHRDH"/>
</dbReference>
<dbReference type="SUPFAM" id="SSF51735">
    <property type="entry name" value="NAD(P)-binding Rossmann-fold domains"/>
    <property type="match status" value="1"/>
</dbReference>